<protein>
    <recommendedName>
        <fullName>Protein UL16</fullName>
    </recommendedName>
</protein>
<organismHost>
    <name type="scientific">Homo sapiens</name>
    <name type="common">Human</name>
    <dbReference type="NCBI Taxonomy" id="9606"/>
</organismHost>
<accession>F5HG68</accession>
<feature type="signal peptide" evidence="2">
    <location>
        <begin position="1"/>
        <end position="21"/>
    </location>
</feature>
<feature type="chain" id="PRO_0000418245" description="Protein UL16">
    <location>
        <begin position="22"/>
        <end position="230"/>
    </location>
</feature>
<feature type="topological domain" description="Extracellular" evidence="2">
    <location>
        <begin position="22"/>
        <end position="184"/>
    </location>
</feature>
<feature type="transmembrane region" description="Helical" evidence="2">
    <location>
        <begin position="185"/>
        <end position="205"/>
    </location>
</feature>
<feature type="topological domain" description="Cytoplasmic" evidence="2">
    <location>
        <begin position="206"/>
        <end position="230"/>
    </location>
</feature>
<feature type="glycosylation site" description="N-linked (GlcNAc...) asparagine; by host" evidence="2">
    <location>
        <position position="35"/>
    </location>
</feature>
<feature type="glycosylation site" description="N-linked (GlcNAc...) asparagine; by host" evidence="2">
    <location>
        <position position="41"/>
    </location>
</feature>
<feature type="glycosylation site" description="N-linked (GlcNAc...) asparagine; by host" evidence="2">
    <location>
        <position position="68"/>
    </location>
</feature>
<feature type="glycosylation site" description="N-linked (GlcNAc...) asparagine; by host" evidence="2">
    <location>
        <position position="84"/>
    </location>
</feature>
<feature type="glycosylation site" description="N-linked (GlcNAc...) asparagine; by host" evidence="2">
    <location>
        <position position="95"/>
    </location>
</feature>
<feature type="glycosylation site" description="N-linked (GlcNAc...) asparagine; by host" evidence="2">
    <location>
        <position position="101"/>
    </location>
</feature>
<feature type="glycosylation site" description="N-linked (GlcNAc...) asparagine; by host" evidence="2">
    <location>
        <position position="132"/>
    </location>
</feature>
<feature type="glycosylation site" description="N-linked (GlcNAc...) asparagine; by host" evidence="2">
    <location>
        <position position="145"/>
    </location>
</feature>
<proteinExistence type="inferred from homology"/>
<keyword id="KW-0325">Glycoprotein</keyword>
<keyword id="KW-1043">Host membrane</keyword>
<keyword id="KW-0472">Membrane</keyword>
<keyword id="KW-1185">Reference proteome</keyword>
<keyword id="KW-0732">Signal</keyword>
<keyword id="KW-0812">Transmembrane</keyword>
<keyword id="KW-1133">Transmembrane helix</keyword>
<sequence>MERRRGTVPLGWVFFVLCLSASSPCAVDLGSKSSNSTCRLNVTELASIHPGETWTLHGMCISICYYENVTEDEIIGVAFTWQHNESVVDLWLYQNDTVIRNFSDITTNILQDGLKMRTVPVTKLYTSRMVTNLTVGRYDCLRCENGTMKIIERLYVRLGSLYPRPPGSGLAKHPSVSADEELSATLARDIVLVSAITLFFFLLALRIPQRLCQRLRIRLPHRYQRLRTED</sequence>
<comment type="function">
    <text evidence="1">Plays a role in the escape of host immune response. Blocks the interaction between the host KLRK1 receptor with their ligand ULBP1 and ULBP2. ULBPs activate multiple signaling pathways in primary NK cells, resulting in the production of cytokines and chemokines. Therefore, the sequestration of diverse KLRK1 ligands in the endoplasmic reticulum and cis-Golgi apparatus of cells by UL16 inhibits the activation of NK cells (By similarity).</text>
</comment>
<comment type="subunit">
    <text evidence="1">Interacts with host ULBP1, ULBP2 and MICB.</text>
</comment>
<comment type="subcellular location">
    <subcellularLocation>
        <location evidence="3">Host membrane</location>
        <topology evidence="3">Single-pass membrane protein</topology>
    </subcellularLocation>
</comment>
<comment type="similarity">
    <text evidence="3">Belongs to the HHV-5 UL16 protein family.</text>
</comment>
<dbReference type="EMBL" id="AY446894">
    <property type="protein sequence ID" value="AAR31581.1"/>
    <property type="molecule type" value="Genomic_DNA"/>
</dbReference>
<dbReference type="RefSeq" id="YP_081475.1">
    <property type="nucleotide sequence ID" value="NC_006273.2"/>
</dbReference>
<dbReference type="SMR" id="F5HG68"/>
<dbReference type="GlyCosmos" id="F5HG68">
    <property type="glycosylation" value="8 sites, No reported glycans"/>
</dbReference>
<dbReference type="DNASU" id="3077464"/>
<dbReference type="GeneID" id="3077464"/>
<dbReference type="KEGG" id="vg:3077464"/>
<dbReference type="Reactome" id="R-HSA-9609690">
    <property type="pathway name" value="HCMV Early Events"/>
</dbReference>
<dbReference type="Proteomes" id="UP000000938">
    <property type="component" value="Segment"/>
</dbReference>
<dbReference type="GO" id="GO:0033644">
    <property type="term" value="C:host cell membrane"/>
    <property type="evidence" value="ECO:0007669"/>
    <property type="project" value="UniProtKB-SubCell"/>
</dbReference>
<dbReference type="GO" id="GO:0016020">
    <property type="term" value="C:membrane"/>
    <property type="evidence" value="ECO:0007669"/>
    <property type="project" value="UniProtKB-KW"/>
</dbReference>
<dbReference type="Gene3D" id="2.60.40.1990">
    <property type="match status" value="1"/>
</dbReference>
<dbReference type="InterPro" id="IPR038671">
    <property type="entry name" value="HCMV_UL16_sf"/>
</dbReference>
<dbReference type="InterPro" id="IPR035123">
    <property type="entry name" value="UL16"/>
</dbReference>
<dbReference type="Pfam" id="PF17622">
    <property type="entry name" value="UL16"/>
    <property type="match status" value="1"/>
</dbReference>
<gene>
    <name type="primary">UL16</name>
</gene>
<organism>
    <name type="scientific">Human cytomegalovirus (strain Merlin)</name>
    <name type="common">HHV-5</name>
    <name type="synonym">Human herpesvirus 5</name>
    <dbReference type="NCBI Taxonomy" id="295027"/>
    <lineage>
        <taxon>Viruses</taxon>
        <taxon>Duplodnaviria</taxon>
        <taxon>Heunggongvirae</taxon>
        <taxon>Peploviricota</taxon>
        <taxon>Herviviricetes</taxon>
        <taxon>Herpesvirales</taxon>
        <taxon>Orthoherpesviridae</taxon>
        <taxon>Betaherpesvirinae</taxon>
        <taxon>Cytomegalovirus</taxon>
        <taxon>Cytomegalovirus humanbeta5</taxon>
        <taxon>Human cytomegalovirus</taxon>
    </lineage>
</organism>
<name>UL16P_HCMVM</name>
<reference key="1">
    <citation type="journal article" date="2004" name="J. Gen. Virol.">
        <title>Genetic content of wild-type human cytomegalovirus.</title>
        <authorList>
            <person name="Dolan A."/>
            <person name="Cunningham C."/>
            <person name="Hector R.D."/>
            <person name="Hassan-Walker A.F."/>
            <person name="Lee L."/>
            <person name="Addison C."/>
            <person name="Dargan D.J."/>
            <person name="McGeoch D.J."/>
            <person name="Gatherer D."/>
            <person name="Emery V.C."/>
            <person name="Griffiths P.D."/>
            <person name="Sinzger C."/>
            <person name="McSharry B.P."/>
            <person name="Wilkinson G.W.G."/>
            <person name="Davison A.J."/>
        </authorList>
    </citation>
    <scope>NUCLEOTIDE SEQUENCE [LARGE SCALE GENOMIC DNA]</scope>
</reference>
<evidence type="ECO:0000250" key="1"/>
<evidence type="ECO:0000255" key="2"/>
<evidence type="ECO:0000305" key="3"/>